<proteinExistence type="inferred from homology"/>
<name>SYL_BARBK</name>
<reference key="1">
    <citation type="submission" date="2006-12" db="EMBL/GenBank/DDBJ databases">
        <authorList>
            <person name="Hendrix L."/>
            <person name="Mohamoud Y."/>
            <person name="Radune D."/>
            <person name="Shvartsbeyn A."/>
            <person name="Daugherty S."/>
            <person name="Dodson R."/>
            <person name="Durkin A.S."/>
            <person name="Harkins D."/>
            <person name="Huot H."/>
            <person name="Kothari S.P."/>
            <person name="Madupu R."/>
            <person name="Li J."/>
            <person name="Nelson W.C."/>
            <person name="Shrivastava S."/>
            <person name="Giglio M.G."/>
            <person name="Haft D."/>
            <person name="Selengut J."/>
            <person name="Fraser-Ligget C."/>
            <person name="Seshadri R."/>
        </authorList>
    </citation>
    <scope>NUCLEOTIDE SEQUENCE [LARGE SCALE GENOMIC DNA]</scope>
    <source>
        <strain>ATCC 35685 / KC583 / Herrer 020/F12,63</strain>
    </source>
</reference>
<evidence type="ECO:0000255" key="1">
    <source>
        <dbReference type="HAMAP-Rule" id="MF_00049"/>
    </source>
</evidence>
<sequence>MTIERYNPRAQEQKWQAIWDEKKIFQTSHEDEGEKYYVLEMFPYPSGRIHMGHVRNYTMGDVVARYKRAKGMNVLHPMGWDAFGMPAENAAMQNKVHPKAWTYQNIAAMRKQLQKLGLSIDWSREFATCDVDYYHRQQMIFLDLYQKGLVVRKVAKVNWDPVDQTVLANEQVIDGRGWRSGALVEQRELTQWFFKITEFGEGLLARLDDLTEWPDKVRVMQKNWIGKSQGLYIRWALDKTQLPHNDGCEGFDEITCYSTRPDTLFGASFLALSVDHPVAQALARNDEELRAFIEMCRCGSTTTEALETAEKQGFRTGVLAVHPLNPAVRLPVYIANFVLMDYGTGAIFGCPAHDQRDLDFARKYDLPVQIVVAPKEAEEQDFTLSDTAYTGDGVMINSDFLNGLTPKDAFEVVAQHLEKQVLNGQPQGQKTVQFRLRDWGVSRQRYWGCPIPMIHCAACGVVPVPRADLPVVLPEDVTFDRPGNPLARHETWQTVACPSCGQPAKRETDTMDTFVDSSWYYARFTAPWAQEPTDQDIAAQWLPVQQYIGGIEHAILHLLYARFFMRAMKLAGHVNADEPFTGLFTQGMVVHETYRDAQGWVAPDEVSIVEQDGKRRAYKLTDQSEVTIGSIEKMSKSKKNVVDPDDIISSYGADTARWFMLSDSPPERDVIWSESGIEGAHRFVQRVWRCVALSAPILSTIEPCAGHQGEALELSKAAHRTLCAVEDDLEKLAFNRAVARLYEFLNIMAPLLNTVADLDDEMKSALRQAMDFFCAMIAPMMPHLAEECHAALGGKTLMSECAWPVYDKALIVEDSVTLPVQINGKKRGDVTVPVTADQAEIEQAVLALSFVQAQLAGKSVKKMIIVPKRIVNVVL</sequence>
<organism>
    <name type="scientific">Bartonella bacilliformis (strain ATCC 35685 / KC583 / Herrer 020/F12,63)</name>
    <dbReference type="NCBI Taxonomy" id="360095"/>
    <lineage>
        <taxon>Bacteria</taxon>
        <taxon>Pseudomonadati</taxon>
        <taxon>Pseudomonadota</taxon>
        <taxon>Alphaproteobacteria</taxon>
        <taxon>Hyphomicrobiales</taxon>
        <taxon>Bartonellaceae</taxon>
        <taxon>Bartonella</taxon>
    </lineage>
</organism>
<dbReference type="EC" id="6.1.1.4" evidence="1"/>
<dbReference type="EMBL" id="CP000524">
    <property type="protein sequence ID" value="ABM45658.1"/>
    <property type="molecule type" value="Genomic_DNA"/>
</dbReference>
<dbReference type="RefSeq" id="WP_005765856.1">
    <property type="nucleotide sequence ID" value="NC_008783.1"/>
</dbReference>
<dbReference type="SMR" id="A1UR39"/>
<dbReference type="STRING" id="360095.BARBAKC583_0104"/>
<dbReference type="GeneID" id="4684393"/>
<dbReference type="KEGG" id="bbk:BARBAKC583_0104"/>
<dbReference type="PATRIC" id="fig|360095.6.peg.104"/>
<dbReference type="eggNOG" id="COG0495">
    <property type="taxonomic scope" value="Bacteria"/>
</dbReference>
<dbReference type="HOGENOM" id="CLU_004427_0_0_5"/>
<dbReference type="OrthoDB" id="9810365at2"/>
<dbReference type="Proteomes" id="UP000000643">
    <property type="component" value="Chromosome"/>
</dbReference>
<dbReference type="GO" id="GO:0005829">
    <property type="term" value="C:cytosol"/>
    <property type="evidence" value="ECO:0007669"/>
    <property type="project" value="TreeGrafter"/>
</dbReference>
<dbReference type="GO" id="GO:0002161">
    <property type="term" value="F:aminoacyl-tRNA deacylase activity"/>
    <property type="evidence" value="ECO:0007669"/>
    <property type="project" value="InterPro"/>
</dbReference>
<dbReference type="GO" id="GO:0005524">
    <property type="term" value="F:ATP binding"/>
    <property type="evidence" value="ECO:0007669"/>
    <property type="project" value="UniProtKB-UniRule"/>
</dbReference>
<dbReference type="GO" id="GO:0004823">
    <property type="term" value="F:leucine-tRNA ligase activity"/>
    <property type="evidence" value="ECO:0007669"/>
    <property type="project" value="UniProtKB-UniRule"/>
</dbReference>
<dbReference type="GO" id="GO:0006429">
    <property type="term" value="P:leucyl-tRNA aminoacylation"/>
    <property type="evidence" value="ECO:0007669"/>
    <property type="project" value="UniProtKB-UniRule"/>
</dbReference>
<dbReference type="CDD" id="cd07958">
    <property type="entry name" value="Anticodon_Ia_Leu_BEm"/>
    <property type="match status" value="1"/>
</dbReference>
<dbReference type="CDD" id="cd00812">
    <property type="entry name" value="LeuRS_core"/>
    <property type="match status" value="1"/>
</dbReference>
<dbReference type="FunFam" id="1.10.730.10:FF:000002">
    <property type="entry name" value="Leucine--tRNA ligase"/>
    <property type="match status" value="1"/>
</dbReference>
<dbReference type="FunFam" id="3.40.50.620:FF:000003">
    <property type="entry name" value="Leucine--tRNA ligase"/>
    <property type="match status" value="1"/>
</dbReference>
<dbReference type="Gene3D" id="2.20.28.290">
    <property type="match status" value="1"/>
</dbReference>
<dbReference type="Gene3D" id="3.10.20.590">
    <property type="match status" value="1"/>
</dbReference>
<dbReference type="Gene3D" id="3.40.50.620">
    <property type="entry name" value="HUPs"/>
    <property type="match status" value="2"/>
</dbReference>
<dbReference type="Gene3D" id="1.10.730.10">
    <property type="entry name" value="Isoleucyl-tRNA Synthetase, Domain 1"/>
    <property type="match status" value="2"/>
</dbReference>
<dbReference type="Gene3D" id="3.90.740.10">
    <property type="entry name" value="Valyl/Leucyl/Isoleucyl-tRNA synthetase, editing domain"/>
    <property type="match status" value="1"/>
</dbReference>
<dbReference type="HAMAP" id="MF_00049_B">
    <property type="entry name" value="Leu_tRNA_synth_B"/>
    <property type="match status" value="1"/>
</dbReference>
<dbReference type="InterPro" id="IPR001412">
    <property type="entry name" value="aa-tRNA-synth_I_CS"/>
</dbReference>
<dbReference type="InterPro" id="IPR002300">
    <property type="entry name" value="aa-tRNA-synth_Ia"/>
</dbReference>
<dbReference type="InterPro" id="IPR002302">
    <property type="entry name" value="Leu-tRNA-ligase"/>
</dbReference>
<dbReference type="InterPro" id="IPR025709">
    <property type="entry name" value="Leu_tRNA-synth_edit"/>
</dbReference>
<dbReference type="InterPro" id="IPR013155">
    <property type="entry name" value="M/V/L/I-tRNA-synth_anticd-bd"/>
</dbReference>
<dbReference type="InterPro" id="IPR015413">
    <property type="entry name" value="Methionyl/Leucyl_tRNA_Synth"/>
</dbReference>
<dbReference type="InterPro" id="IPR014729">
    <property type="entry name" value="Rossmann-like_a/b/a_fold"/>
</dbReference>
<dbReference type="InterPro" id="IPR009080">
    <property type="entry name" value="tRNAsynth_Ia_anticodon-bd"/>
</dbReference>
<dbReference type="InterPro" id="IPR009008">
    <property type="entry name" value="Val/Leu/Ile-tRNA-synth_edit"/>
</dbReference>
<dbReference type="NCBIfam" id="TIGR00396">
    <property type="entry name" value="leuS_bact"/>
    <property type="match status" value="1"/>
</dbReference>
<dbReference type="PANTHER" id="PTHR43740:SF2">
    <property type="entry name" value="LEUCINE--TRNA LIGASE, MITOCHONDRIAL"/>
    <property type="match status" value="1"/>
</dbReference>
<dbReference type="PANTHER" id="PTHR43740">
    <property type="entry name" value="LEUCYL-TRNA SYNTHETASE"/>
    <property type="match status" value="1"/>
</dbReference>
<dbReference type="Pfam" id="PF08264">
    <property type="entry name" value="Anticodon_1"/>
    <property type="match status" value="1"/>
</dbReference>
<dbReference type="Pfam" id="PF00133">
    <property type="entry name" value="tRNA-synt_1"/>
    <property type="match status" value="2"/>
</dbReference>
<dbReference type="Pfam" id="PF13603">
    <property type="entry name" value="tRNA-synt_1_2"/>
    <property type="match status" value="1"/>
</dbReference>
<dbReference type="Pfam" id="PF09334">
    <property type="entry name" value="tRNA-synt_1g"/>
    <property type="match status" value="1"/>
</dbReference>
<dbReference type="PRINTS" id="PR00985">
    <property type="entry name" value="TRNASYNTHLEU"/>
</dbReference>
<dbReference type="SUPFAM" id="SSF47323">
    <property type="entry name" value="Anticodon-binding domain of a subclass of class I aminoacyl-tRNA synthetases"/>
    <property type="match status" value="1"/>
</dbReference>
<dbReference type="SUPFAM" id="SSF52374">
    <property type="entry name" value="Nucleotidylyl transferase"/>
    <property type="match status" value="1"/>
</dbReference>
<dbReference type="SUPFAM" id="SSF50677">
    <property type="entry name" value="ValRS/IleRS/LeuRS editing domain"/>
    <property type="match status" value="1"/>
</dbReference>
<dbReference type="PROSITE" id="PS00178">
    <property type="entry name" value="AA_TRNA_LIGASE_I"/>
    <property type="match status" value="1"/>
</dbReference>
<feature type="chain" id="PRO_1000009295" description="Leucine--tRNA ligase">
    <location>
        <begin position="1"/>
        <end position="875"/>
    </location>
</feature>
<feature type="short sequence motif" description="'HIGH' region">
    <location>
        <begin position="43"/>
        <end position="53"/>
    </location>
</feature>
<feature type="short sequence motif" description="'KMSKS' region">
    <location>
        <begin position="633"/>
        <end position="637"/>
    </location>
</feature>
<feature type="binding site" evidence="1">
    <location>
        <position position="636"/>
    </location>
    <ligand>
        <name>ATP</name>
        <dbReference type="ChEBI" id="CHEBI:30616"/>
    </ligand>
</feature>
<comment type="catalytic activity">
    <reaction evidence="1">
        <text>tRNA(Leu) + L-leucine + ATP = L-leucyl-tRNA(Leu) + AMP + diphosphate</text>
        <dbReference type="Rhea" id="RHEA:11688"/>
        <dbReference type="Rhea" id="RHEA-COMP:9613"/>
        <dbReference type="Rhea" id="RHEA-COMP:9622"/>
        <dbReference type="ChEBI" id="CHEBI:30616"/>
        <dbReference type="ChEBI" id="CHEBI:33019"/>
        <dbReference type="ChEBI" id="CHEBI:57427"/>
        <dbReference type="ChEBI" id="CHEBI:78442"/>
        <dbReference type="ChEBI" id="CHEBI:78494"/>
        <dbReference type="ChEBI" id="CHEBI:456215"/>
        <dbReference type="EC" id="6.1.1.4"/>
    </reaction>
</comment>
<comment type="subcellular location">
    <subcellularLocation>
        <location evidence="1">Cytoplasm</location>
    </subcellularLocation>
</comment>
<comment type="similarity">
    <text evidence="1">Belongs to the class-I aminoacyl-tRNA synthetase family.</text>
</comment>
<keyword id="KW-0030">Aminoacyl-tRNA synthetase</keyword>
<keyword id="KW-0067">ATP-binding</keyword>
<keyword id="KW-0963">Cytoplasm</keyword>
<keyword id="KW-0436">Ligase</keyword>
<keyword id="KW-0547">Nucleotide-binding</keyword>
<keyword id="KW-0648">Protein biosynthesis</keyword>
<gene>
    <name evidence="1" type="primary">leuS</name>
    <name type="ordered locus">BARBAKC583_0104</name>
</gene>
<protein>
    <recommendedName>
        <fullName evidence="1">Leucine--tRNA ligase</fullName>
        <ecNumber evidence="1">6.1.1.4</ecNumber>
    </recommendedName>
    <alternativeName>
        <fullName evidence="1">Leucyl-tRNA synthetase</fullName>
        <shortName evidence="1">LeuRS</shortName>
    </alternativeName>
</protein>
<accession>A1UR39</accession>